<sequence>MSASLLVRTACGGRAVAQRLRTVLWPITQTSVVAGLAWYLTHDVFNHPQAFFAPISAVVCMSATNVLRARRAQQMIVGVALGIVLGAGVHALLGSGPIAMGVVVFIALSVAVLCARGLVAQGLMFINQAAVSAVLVLVFASNGSVVFERLFDALVGGGLAIVFSILLFPPDPVVMLCSARADVLAAVRDILAELVNTVSDPTSAPPDWPMAAADRLHQQLNGLIEVRANAAMVARRAPRRWGVRSTVRDLDQQAVYLALLVSSVLHLARTIAGPGGDKLPTPVHAVLTDLAAGTGLADADPTAANEHAAAARATASTLQSAACGSNEVVRADIVQACVTDLQRVIERPGPSGMSA</sequence>
<evidence type="ECO:0000250" key="1">
    <source>
        <dbReference type="UniProtKB" id="P9WL89"/>
    </source>
</evidence>
<evidence type="ECO:0000255" key="2"/>
<evidence type="ECO:0000305" key="3"/>
<proteinExistence type="inferred from homology"/>
<comment type="function">
    <text evidence="1">May be involved in the import of arylamide compounds.</text>
</comment>
<comment type="subcellular location">
    <subcellularLocation>
        <location evidence="3">Cell membrane</location>
        <topology evidence="2">Multi-pass membrane protein</topology>
    </subcellularLocation>
</comment>
<organism>
    <name type="scientific">Mycobacterium tuberculosis (strain CDC 1551 / Oshkosh)</name>
    <dbReference type="NCBI Taxonomy" id="83331"/>
    <lineage>
        <taxon>Bacteria</taxon>
        <taxon>Bacillati</taxon>
        <taxon>Actinomycetota</taxon>
        <taxon>Actinomycetes</taxon>
        <taxon>Mycobacteriales</taxon>
        <taxon>Mycobacteriaceae</taxon>
        <taxon>Mycobacterium</taxon>
        <taxon>Mycobacterium tuberculosis complex</taxon>
    </lineage>
</organism>
<dbReference type="EMBL" id="AE000516">
    <property type="protein sequence ID" value="AAK46960.1"/>
    <property type="molecule type" value="Genomic_DNA"/>
</dbReference>
<dbReference type="PIR" id="B70724">
    <property type="entry name" value="B70724"/>
</dbReference>
<dbReference type="RefSeq" id="WP_003899381.1">
    <property type="nucleotide sequence ID" value="NZ_KK341227.1"/>
</dbReference>
<dbReference type="SMR" id="P9WL88"/>
<dbReference type="KEGG" id="mtc:MT2647"/>
<dbReference type="PATRIC" id="fig|83331.31.peg.2854"/>
<dbReference type="HOGENOM" id="CLU_046662_1_0_11"/>
<dbReference type="Proteomes" id="UP000001020">
    <property type="component" value="Chromosome"/>
</dbReference>
<dbReference type="GO" id="GO:0005886">
    <property type="term" value="C:plasma membrane"/>
    <property type="evidence" value="ECO:0007669"/>
    <property type="project" value="UniProtKB-SubCell"/>
</dbReference>
<dbReference type="InterPro" id="IPR049453">
    <property type="entry name" value="Memb_transporter_dom"/>
</dbReference>
<dbReference type="Pfam" id="PF13515">
    <property type="entry name" value="FUSC_2"/>
    <property type="match status" value="1"/>
</dbReference>
<protein>
    <recommendedName>
        <fullName evidence="1">Putative arylamide transporter</fullName>
    </recommendedName>
</protein>
<reference key="1">
    <citation type="journal article" date="2002" name="J. Bacteriol.">
        <title>Whole-genome comparison of Mycobacterium tuberculosis clinical and laboratory strains.</title>
        <authorList>
            <person name="Fleischmann R.D."/>
            <person name="Alland D."/>
            <person name="Eisen J.A."/>
            <person name="Carpenter L."/>
            <person name="White O."/>
            <person name="Peterson J.D."/>
            <person name="DeBoy R.T."/>
            <person name="Dodson R.J."/>
            <person name="Gwinn M.L."/>
            <person name="Haft D.H."/>
            <person name="Hickey E.K."/>
            <person name="Kolonay J.F."/>
            <person name="Nelson W.C."/>
            <person name="Umayam L.A."/>
            <person name="Ermolaeva M.D."/>
            <person name="Salzberg S.L."/>
            <person name="Delcher A."/>
            <person name="Utterback T.R."/>
            <person name="Weidman J.F."/>
            <person name="Khouri H.M."/>
            <person name="Gill J."/>
            <person name="Mikula A."/>
            <person name="Bishai W."/>
            <person name="Jacobs W.R. Jr."/>
            <person name="Venter J.C."/>
            <person name="Fraser C.M."/>
        </authorList>
    </citation>
    <scope>NUCLEOTIDE SEQUENCE [LARGE SCALE GENOMIC DNA]</scope>
    <source>
        <strain>CDC 1551 / Oshkosh</strain>
    </source>
</reference>
<accession>P9WL88</accession>
<accession>L0TCY2</accession>
<accession>P65015</accession>
<accession>Q50650</accession>
<name>ARYLT_MYCTO</name>
<keyword id="KW-1003">Cell membrane</keyword>
<keyword id="KW-0472">Membrane</keyword>
<keyword id="KW-1185">Reference proteome</keyword>
<keyword id="KW-0812">Transmembrane</keyword>
<keyword id="KW-1133">Transmembrane helix</keyword>
<keyword id="KW-0813">Transport</keyword>
<gene>
    <name type="ordered locus">MT2647</name>
</gene>
<feature type="chain" id="PRO_0000427521" description="Putative arylamide transporter">
    <location>
        <begin position="1"/>
        <end position="355"/>
    </location>
</feature>
<feature type="transmembrane region" description="Helical" evidence="2">
    <location>
        <begin position="22"/>
        <end position="42"/>
    </location>
</feature>
<feature type="transmembrane region" description="Helical" evidence="2">
    <location>
        <begin position="44"/>
        <end position="64"/>
    </location>
</feature>
<feature type="transmembrane region" description="Helical" evidence="2">
    <location>
        <begin position="71"/>
        <end position="91"/>
    </location>
</feature>
<feature type="transmembrane region" description="Helical" evidence="2">
    <location>
        <begin position="92"/>
        <end position="112"/>
    </location>
</feature>
<feature type="transmembrane region" description="Helical" evidence="2">
    <location>
        <begin position="119"/>
        <end position="139"/>
    </location>
</feature>
<feature type="transmembrane region" description="Helical" evidence="2">
    <location>
        <begin position="150"/>
        <end position="170"/>
    </location>
</feature>